<organism>
    <name type="scientific">Zymomonas mobilis subsp. mobilis (strain ATCC 31821 / ZM4 / CP4)</name>
    <dbReference type="NCBI Taxonomy" id="264203"/>
    <lineage>
        <taxon>Bacteria</taxon>
        <taxon>Pseudomonadati</taxon>
        <taxon>Pseudomonadota</taxon>
        <taxon>Alphaproteobacteria</taxon>
        <taxon>Sphingomonadales</taxon>
        <taxon>Zymomonadaceae</taxon>
        <taxon>Zymomonas</taxon>
    </lineage>
</organism>
<proteinExistence type="inferred from homology"/>
<reference key="1">
    <citation type="journal article" date="2005" name="Nat. Biotechnol.">
        <title>The genome sequence of the ethanologenic bacterium Zymomonas mobilis ZM4.</title>
        <authorList>
            <person name="Seo J.-S."/>
            <person name="Chong H."/>
            <person name="Park H.S."/>
            <person name="Yoon K.-O."/>
            <person name="Jung C."/>
            <person name="Kim J.J."/>
            <person name="Hong J.H."/>
            <person name="Kim H."/>
            <person name="Kim J.-H."/>
            <person name="Kil J.-I."/>
            <person name="Park C.J."/>
            <person name="Oh H.-M."/>
            <person name="Lee J.-S."/>
            <person name="Jin S.-J."/>
            <person name="Um H.-W."/>
            <person name="Lee H.-J."/>
            <person name="Oh S.-J."/>
            <person name="Kim J.Y."/>
            <person name="Kang H.L."/>
            <person name="Lee S.Y."/>
            <person name="Lee K.J."/>
            <person name="Kang H.S."/>
        </authorList>
    </citation>
    <scope>NUCLEOTIDE SEQUENCE [LARGE SCALE GENOMIC DNA]</scope>
    <source>
        <strain>ATCC 31821 / ZM4 / CP4</strain>
    </source>
</reference>
<comment type="function">
    <text evidence="1">With CysN forms the ATP sulfurylase (ATPS) that catalyzes the adenylation of sulfate producing adenosine 5'-phosphosulfate (APS) and diphosphate, the first enzymatic step in sulfur assimilation pathway. APS synthesis involves the formation of a high-energy phosphoric-sulfuric acid anhydride bond driven by GTP hydrolysis by CysN coupled to ATP hydrolysis by CysD.</text>
</comment>
<comment type="catalytic activity">
    <reaction evidence="1">
        <text>sulfate + ATP + H(+) = adenosine 5'-phosphosulfate + diphosphate</text>
        <dbReference type="Rhea" id="RHEA:18133"/>
        <dbReference type="ChEBI" id="CHEBI:15378"/>
        <dbReference type="ChEBI" id="CHEBI:16189"/>
        <dbReference type="ChEBI" id="CHEBI:30616"/>
        <dbReference type="ChEBI" id="CHEBI:33019"/>
        <dbReference type="ChEBI" id="CHEBI:58243"/>
        <dbReference type="EC" id="2.7.7.4"/>
    </reaction>
</comment>
<comment type="pathway">
    <text evidence="1">Sulfur metabolism; hydrogen sulfide biosynthesis; sulfite from sulfate: step 1/3.</text>
</comment>
<comment type="subunit">
    <text evidence="1">Heterodimer composed of CysD, the smaller subunit, and CysN.</text>
</comment>
<comment type="similarity">
    <text evidence="1">Belongs to the PAPS reductase family. CysD subfamily.</text>
</comment>
<sequence length="302" mass="35395">MQEERLTHLRQLEAESIYIIREVAAEFGNPVMLYSIGKDSSVMLHLARKAFFPGTLPFPLLHVDTGWKFREMYEFRDRTAKEYDFNLLVYKNPEGEALGINPFIHGSAKHTDIMKTEGLKQALDKYGFDAAFGGARRDEEKSRAKERIYSFRDKFHRWDPKNQRPELWHNYNGQINKGESIRVFPLSNWTELDIWQYIYLENIDIVPLYLAAKRPVIERDGMLMMVDDDRIDLKEGEKVEERMVRFRTLGCWPLTGAVESQAQTLPEIIEEMLVSTTSERQGRVIDRDQSGSMELKKRQGYF</sequence>
<keyword id="KW-0067">ATP-binding</keyword>
<keyword id="KW-0547">Nucleotide-binding</keyword>
<keyword id="KW-0548">Nucleotidyltransferase</keyword>
<keyword id="KW-1185">Reference proteome</keyword>
<keyword id="KW-0808">Transferase</keyword>
<dbReference type="EC" id="2.7.7.4" evidence="1"/>
<dbReference type="EMBL" id="AE008692">
    <property type="protein sequence ID" value="AAV88629.1"/>
    <property type="molecule type" value="Genomic_DNA"/>
</dbReference>
<dbReference type="RefSeq" id="WP_011239993.1">
    <property type="nucleotide sequence ID" value="NZ_CP035711.1"/>
</dbReference>
<dbReference type="SMR" id="Q5NRM5"/>
<dbReference type="STRING" id="264203.ZMO0005"/>
<dbReference type="GeneID" id="79904725"/>
<dbReference type="KEGG" id="zmo:ZMO0005"/>
<dbReference type="eggNOG" id="COG0175">
    <property type="taxonomic scope" value="Bacteria"/>
</dbReference>
<dbReference type="HOGENOM" id="CLU_043026_0_0_5"/>
<dbReference type="UniPathway" id="UPA00140">
    <property type="reaction ID" value="UER00204"/>
</dbReference>
<dbReference type="Proteomes" id="UP000001173">
    <property type="component" value="Chromosome"/>
</dbReference>
<dbReference type="GO" id="GO:0005524">
    <property type="term" value="F:ATP binding"/>
    <property type="evidence" value="ECO:0007669"/>
    <property type="project" value="UniProtKB-KW"/>
</dbReference>
<dbReference type="GO" id="GO:0004781">
    <property type="term" value="F:sulfate adenylyltransferase (ATP) activity"/>
    <property type="evidence" value="ECO:0007669"/>
    <property type="project" value="UniProtKB-UniRule"/>
</dbReference>
<dbReference type="GO" id="GO:0070814">
    <property type="term" value="P:hydrogen sulfide biosynthetic process"/>
    <property type="evidence" value="ECO:0007669"/>
    <property type="project" value="UniProtKB-UniRule"/>
</dbReference>
<dbReference type="GO" id="GO:0000103">
    <property type="term" value="P:sulfate assimilation"/>
    <property type="evidence" value="ECO:0007669"/>
    <property type="project" value="UniProtKB-UniRule"/>
</dbReference>
<dbReference type="CDD" id="cd23946">
    <property type="entry name" value="Sulfate_adenylyltransferase_2"/>
    <property type="match status" value="1"/>
</dbReference>
<dbReference type="FunFam" id="3.40.50.620:FF:000002">
    <property type="entry name" value="Sulfate adenylyltransferase subunit 2"/>
    <property type="match status" value="1"/>
</dbReference>
<dbReference type="Gene3D" id="3.40.50.620">
    <property type="entry name" value="HUPs"/>
    <property type="match status" value="1"/>
</dbReference>
<dbReference type="HAMAP" id="MF_00064">
    <property type="entry name" value="Sulf_adenylyltr_sub2"/>
    <property type="match status" value="1"/>
</dbReference>
<dbReference type="InterPro" id="IPR002500">
    <property type="entry name" value="PAPS_reduct_dom"/>
</dbReference>
<dbReference type="InterPro" id="IPR014729">
    <property type="entry name" value="Rossmann-like_a/b/a_fold"/>
</dbReference>
<dbReference type="InterPro" id="IPR011784">
    <property type="entry name" value="SO4_adenylTrfase_ssu"/>
</dbReference>
<dbReference type="InterPro" id="IPR050128">
    <property type="entry name" value="Sulfate_adenylyltrnsfr_sub2"/>
</dbReference>
<dbReference type="NCBIfam" id="TIGR02039">
    <property type="entry name" value="CysD"/>
    <property type="match status" value="1"/>
</dbReference>
<dbReference type="NCBIfam" id="NF003587">
    <property type="entry name" value="PRK05253.1"/>
    <property type="match status" value="1"/>
</dbReference>
<dbReference type="NCBIfam" id="NF009214">
    <property type="entry name" value="PRK12563.1"/>
    <property type="match status" value="1"/>
</dbReference>
<dbReference type="PANTHER" id="PTHR43196">
    <property type="entry name" value="SULFATE ADENYLYLTRANSFERASE SUBUNIT 2"/>
    <property type="match status" value="1"/>
</dbReference>
<dbReference type="PANTHER" id="PTHR43196:SF1">
    <property type="entry name" value="SULFATE ADENYLYLTRANSFERASE SUBUNIT 2"/>
    <property type="match status" value="1"/>
</dbReference>
<dbReference type="Pfam" id="PF01507">
    <property type="entry name" value="PAPS_reduct"/>
    <property type="match status" value="1"/>
</dbReference>
<dbReference type="PIRSF" id="PIRSF002936">
    <property type="entry name" value="CysDAde_trans"/>
    <property type="match status" value="1"/>
</dbReference>
<dbReference type="SUPFAM" id="SSF52402">
    <property type="entry name" value="Adenine nucleotide alpha hydrolases-like"/>
    <property type="match status" value="1"/>
</dbReference>
<gene>
    <name evidence="1" type="primary">cysD</name>
    <name type="ordered locus">ZMO0005</name>
</gene>
<feature type="chain" id="PRO_1000009005" description="Sulfate adenylyltransferase subunit 2">
    <location>
        <begin position="1"/>
        <end position="302"/>
    </location>
</feature>
<name>CYSD_ZYMMO</name>
<accession>Q5NRM5</accession>
<protein>
    <recommendedName>
        <fullName evidence="1">Sulfate adenylyltransferase subunit 2</fullName>
        <ecNumber evidence="1">2.7.7.4</ecNumber>
    </recommendedName>
    <alternativeName>
        <fullName evidence="1">ATP-sulfurylase small subunit</fullName>
    </alternativeName>
    <alternativeName>
        <fullName evidence="1">Sulfate adenylate transferase</fullName>
        <shortName evidence="1">SAT</shortName>
    </alternativeName>
</protein>
<evidence type="ECO:0000255" key="1">
    <source>
        <dbReference type="HAMAP-Rule" id="MF_00064"/>
    </source>
</evidence>